<gene>
    <name type="primary">Ubr7</name>
</gene>
<feature type="chain" id="PRO_0000089933" description="Putative E3 ubiquitin-protein ligase UBR7">
    <location>
        <begin position="1"/>
        <end position="425"/>
    </location>
</feature>
<feature type="zinc finger region" description="UBR-type" evidence="3">
    <location>
        <begin position="44"/>
        <end position="116"/>
    </location>
</feature>
<feature type="zinc finger region" description="PHD-type; atypical">
    <location>
        <begin position="132"/>
        <end position="188"/>
    </location>
</feature>
<feature type="region of interest" description="Disordered" evidence="4">
    <location>
        <begin position="212"/>
        <end position="269"/>
    </location>
</feature>
<feature type="compositionally biased region" description="Basic and acidic residues" evidence="4">
    <location>
        <begin position="235"/>
        <end position="257"/>
    </location>
</feature>
<feature type="modified residue" description="Phosphoserine" evidence="2">
    <location>
        <position position="264"/>
    </location>
</feature>
<feature type="cross-link" description="Glycyl lysine isopeptide (Lys-Gly) (interchain with G-Cter in SUMO2)" evidence="2">
    <location>
        <position position="225"/>
    </location>
</feature>
<feature type="cross-link" description="Glycyl lysine isopeptide (Lys-Gly) (interchain with G-Cter in SUMO2)" evidence="2">
    <location>
        <position position="252"/>
    </location>
</feature>
<feature type="cross-link" description="Glycyl lysine isopeptide (Lys-Gly) (interchain with G-Cter in SUMO2)" evidence="2">
    <location>
        <position position="274"/>
    </location>
</feature>
<feature type="cross-link" description="Glycyl lysine isopeptide (Lys-Gly) (interchain with G-Cter in SUMO2)" evidence="2">
    <location>
        <position position="398"/>
    </location>
</feature>
<accession>Q8BU04</accession>
<accession>Q80UT9</accession>
<comment type="function">
    <text evidence="1">E3 ubiquitin-protein ligase which is a component of the N-end rule pathway. Recognizes and binds to proteins bearing specific N-terminal residues that are destabilizing according to the N-end rule, leading to their ubiquitination and subsequent degradation.</text>
</comment>
<comment type="catalytic activity">
    <reaction>
        <text>S-ubiquitinyl-[E2 ubiquitin-conjugating enzyme]-L-cysteine + [acceptor protein]-L-lysine = [E2 ubiquitin-conjugating enzyme]-L-cysteine + N(6)-ubiquitinyl-[acceptor protein]-L-lysine.</text>
        <dbReference type="EC" id="2.3.2.27"/>
    </reaction>
</comment>
<comment type="pathway">
    <text>Protein modification; protein ubiquitination.</text>
</comment>
<comment type="tissue specificity">
    <text evidence="5">Expressed in testis and sperm (at protein level).</text>
</comment>
<keyword id="KW-1017">Isopeptide bond</keyword>
<keyword id="KW-0479">Metal-binding</keyword>
<keyword id="KW-0597">Phosphoprotein</keyword>
<keyword id="KW-1185">Reference proteome</keyword>
<keyword id="KW-0808">Transferase</keyword>
<keyword id="KW-0832">Ubl conjugation</keyword>
<keyword id="KW-0833">Ubl conjugation pathway</keyword>
<keyword id="KW-0862">Zinc</keyword>
<keyword id="KW-0863">Zinc-finger</keyword>
<organism>
    <name type="scientific">Mus musculus</name>
    <name type="common">Mouse</name>
    <dbReference type="NCBI Taxonomy" id="10090"/>
    <lineage>
        <taxon>Eukaryota</taxon>
        <taxon>Metazoa</taxon>
        <taxon>Chordata</taxon>
        <taxon>Craniata</taxon>
        <taxon>Vertebrata</taxon>
        <taxon>Euteleostomi</taxon>
        <taxon>Mammalia</taxon>
        <taxon>Eutheria</taxon>
        <taxon>Euarchontoglires</taxon>
        <taxon>Glires</taxon>
        <taxon>Rodentia</taxon>
        <taxon>Myomorpha</taxon>
        <taxon>Muroidea</taxon>
        <taxon>Muridae</taxon>
        <taxon>Murinae</taxon>
        <taxon>Mus</taxon>
        <taxon>Mus</taxon>
    </lineage>
</organism>
<reference key="1">
    <citation type="journal article" date="2005" name="Science">
        <title>The transcriptional landscape of the mammalian genome.</title>
        <authorList>
            <person name="Carninci P."/>
            <person name="Kasukawa T."/>
            <person name="Katayama S."/>
            <person name="Gough J."/>
            <person name="Frith M.C."/>
            <person name="Maeda N."/>
            <person name="Oyama R."/>
            <person name="Ravasi T."/>
            <person name="Lenhard B."/>
            <person name="Wells C."/>
            <person name="Kodzius R."/>
            <person name="Shimokawa K."/>
            <person name="Bajic V.B."/>
            <person name="Brenner S.E."/>
            <person name="Batalov S."/>
            <person name="Forrest A.R."/>
            <person name="Zavolan M."/>
            <person name="Davis M.J."/>
            <person name="Wilming L.G."/>
            <person name="Aidinis V."/>
            <person name="Allen J.E."/>
            <person name="Ambesi-Impiombato A."/>
            <person name="Apweiler R."/>
            <person name="Aturaliya R.N."/>
            <person name="Bailey T.L."/>
            <person name="Bansal M."/>
            <person name="Baxter L."/>
            <person name="Beisel K.W."/>
            <person name="Bersano T."/>
            <person name="Bono H."/>
            <person name="Chalk A.M."/>
            <person name="Chiu K.P."/>
            <person name="Choudhary V."/>
            <person name="Christoffels A."/>
            <person name="Clutterbuck D.R."/>
            <person name="Crowe M.L."/>
            <person name="Dalla E."/>
            <person name="Dalrymple B.P."/>
            <person name="de Bono B."/>
            <person name="Della Gatta G."/>
            <person name="di Bernardo D."/>
            <person name="Down T."/>
            <person name="Engstrom P."/>
            <person name="Fagiolini M."/>
            <person name="Faulkner G."/>
            <person name="Fletcher C.F."/>
            <person name="Fukushima T."/>
            <person name="Furuno M."/>
            <person name="Futaki S."/>
            <person name="Gariboldi M."/>
            <person name="Georgii-Hemming P."/>
            <person name="Gingeras T.R."/>
            <person name="Gojobori T."/>
            <person name="Green R.E."/>
            <person name="Gustincich S."/>
            <person name="Harbers M."/>
            <person name="Hayashi Y."/>
            <person name="Hensch T.K."/>
            <person name="Hirokawa N."/>
            <person name="Hill D."/>
            <person name="Huminiecki L."/>
            <person name="Iacono M."/>
            <person name="Ikeo K."/>
            <person name="Iwama A."/>
            <person name="Ishikawa T."/>
            <person name="Jakt M."/>
            <person name="Kanapin A."/>
            <person name="Katoh M."/>
            <person name="Kawasawa Y."/>
            <person name="Kelso J."/>
            <person name="Kitamura H."/>
            <person name="Kitano H."/>
            <person name="Kollias G."/>
            <person name="Krishnan S.P."/>
            <person name="Kruger A."/>
            <person name="Kummerfeld S.K."/>
            <person name="Kurochkin I.V."/>
            <person name="Lareau L.F."/>
            <person name="Lazarevic D."/>
            <person name="Lipovich L."/>
            <person name="Liu J."/>
            <person name="Liuni S."/>
            <person name="McWilliam S."/>
            <person name="Madan Babu M."/>
            <person name="Madera M."/>
            <person name="Marchionni L."/>
            <person name="Matsuda H."/>
            <person name="Matsuzawa S."/>
            <person name="Miki H."/>
            <person name="Mignone F."/>
            <person name="Miyake S."/>
            <person name="Morris K."/>
            <person name="Mottagui-Tabar S."/>
            <person name="Mulder N."/>
            <person name="Nakano N."/>
            <person name="Nakauchi H."/>
            <person name="Ng P."/>
            <person name="Nilsson R."/>
            <person name="Nishiguchi S."/>
            <person name="Nishikawa S."/>
            <person name="Nori F."/>
            <person name="Ohara O."/>
            <person name="Okazaki Y."/>
            <person name="Orlando V."/>
            <person name="Pang K.C."/>
            <person name="Pavan W.J."/>
            <person name="Pavesi G."/>
            <person name="Pesole G."/>
            <person name="Petrovsky N."/>
            <person name="Piazza S."/>
            <person name="Reed J."/>
            <person name="Reid J.F."/>
            <person name="Ring B.Z."/>
            <person name="Ringwald M."/>
            <person name="Rost B."/>
            <person name="Ruan Y."/>
            <person name="Salzberg S.L."/>
            <person name="Sandelin A."/>
            <person name="Schneider C."/>
            <person name="Schoenbach C."/>
            <person name="Sekiguchi K."/>
            <person name="Semple C.A."/>
            <person name="Seno S."/>
            <person name="Sessa L."/>
            <person name="Sheng Y."/>
            <person name="Shibata Y."/>
            <person name="Shimada H."/>
            <person name="Shimada K."/>
            <person name="Silva D."/>
            <person name="Sinclair B."/>
            <person name="Sperling S."/>
            <person name="Stupka E."/>
            <person name="Sugiura K."/>
            <person name="Sultana R."/>
            <person name="Takenaka Y."/>
            <person name="Taki K."/>
            <person name="Tammoja K."/>
            <person name="Tan S.L."/>
            <person name="Tang S."/>
            <person name="Taylor M.S."/>
            <person name="Tegner J."/>
            <person name="Teichmann S.A."/>
            <person name="Ueda H.R."/>
            <person name="van Nimwegen E."/>
            <person name="Verardo R."/>
            <person name="Wei C.L."/>
            <person name="Yagi K."/>
            <person name="Yamanishi H."/>
            <person name="Zabarovsky E."/>
            <person name="Zhu S."/>
            <person name="Zimmer A."/>
            <person name="Hide W."/>
            <person name="Bult C."/>
            <person name="Grimmond S.M."/>
            <person name="Teasdale R.D."/>
            <person name="Liu E.T."/>
            <person name="Brusic V."/>
            <person name="Quackenbush J."/>
            <person name="Wahlestedt C."/>
            <person name="Mattick J.S."/>
            <person name="Hume D.A."/>
            <person name="Kai C."/>
            <person name="Sasaki D."/>
            <person name="Tomaru Y."/>
            <person name="Fukuda S."/>
            <person name="Kanamori-Katayama M."/>
            <person name="Suzuki M."/>
            <person name="Aoki J."/>
            <person name="Arakawa T."/>
            <person name="Iida J."/>
            <person name="Imamura K."/>
            <person name="Itoh M."/>
            <person name="Kato T."/>
            <person name="Kawaji H."/>
            <person name="Kawagashira N."/>
            <person name="Kawashima T."/>
            <person name="Kojima M."/>
            <person name="Kondo S."/>
            <person name="Konno H."/>
            <person name="Nakano K."/>
            <person name="Ninomiya N."/>
            <person name="Nishio T."/>
            <person name="Okada M."/>
            <person name="Plessy C."/>
            <person name="Shibata K."/>
            <person name="Shiraki T."/>
            <person name="Suzuki S."/>
            <person name="Tagami M."/>
            <person name="Waki K."/>
            <person name="Watahiki A."/>
            <person name="Okamura-Oho Y."/>
            <person name="Suzuki H."/>
            <person name="Kawai J."/>
            <person name="Hayashizaki Y."/>
        </authorList>
    </citation>
    <scope>NUCLEOTIDE SEQUENCE [LARGE SCALE MRNA]</scope>
    <source>
        <strain>NOD</strain>
        <tissue>Thymus</tissue>
    </source>
</reference>
<reference key="2">
    <citation type="journal article" date="2004" name="Genome Res.">
        <title>The status, quality, and expansion of the NIH full-length cDNA project: the Mammalian Gene Collection (MGC).</title>
        <authorList>
            <consortium name="The MGC Project Team"/>
        </authorList>
    </citation>
    <scope>NUCLEOTIDE SEQUENCE [LARGE SCALE MRNA] OF 141-425</scope>
    <source>
        <strain>129/Sv X 129/SvCp</strain>
        <tissue>Embryonic stem cell</tissue>
    </source>
</reference>
<reference key="3">
    <citation type="journal article" date="2005" name="Mol. Cell. Biol.">
        <title>A family of mammalian E3 ubiquitin ligases that contain the UBR box motif and recognize N-degrons.</title>
        <authorList>
            <person name="Tasaki T."/>
            <person name="Mulder L.C.F."/>
            <person name="Iwamatsu A."/>
            <person name="Lee M.J."/>
            <person name="Davydov I.V."/>
            <person name="Varshavsky A."/>
            <person name="Muesing M."/>
            <person name="Kwon Y.T."/>
        </authorList>
    </citation>
    <scope>IDENTIFICATION</scope>
</reference>
<reference key="4">
    <citation type="journal article" date="2010" name="Cell">
        <title>A tissue-specific atlas of mouse protein phosphorylation and expression.</title>
        <authorList>
            <person name="Huttlin E.L."/>
            <person name="Jedrychowski M.P."/>
            <person name="Elias J.E."/>
            <person name="Goswami T."/>
            <person name="Rad R."/>
            <person name="Beausoleil S.A."/>
            <person name="Villen J."/>
            <person name="Haas W."/>
            <person name="Sowa M.E."/>
            <person name="Gygi S.P."/>
        </authorList>
    </citation>
    <scope>IDENTIFICATION BY MASS SPECTROMETRY [LARGE SCALE ANALYSIS]</scope>
    <source>
        <tissue>Spleen</tissue>
        <tissue>Testis</tissue>
    </source>
</reference>
<reference key="5">
    <citation type="journal article" date="2014" name="Cell Tissue Res.">
        <title>Identification and characterization of RING-finger ubiquitin ligase UBR7 in mammalian spermatozoa.</title>
        <authorList>
            <person name="Zimmerman S.W."/>
            <person name="Yi Y.J."/>
            <person name="Sutovsky M."/>
            <person name="van Leeuwen F.W."/>
            <person name="Conant G."/>
            <person name="Sutovsky P."/>
        </authorList>
    </citation>
    <scope>TISSUE SPECIFICITY</scope>
</reference>
<sequence length="425" mass="48065">MAGAESPTECQAELEPVVSLVDVLEEDEELENEACAVLGGSDSEKCSYSQGSVGRQALYACSTCTPEGEEPAGICLACSYECHGSHKLFELYTKRNFRCDCGNSKFKNLECKLFPDKSKVNSCNKYNDNFFGLYCVCKRPYPDPEDEVPDEMIQCVVCEDWFHGRHLGAIPPESGDFQEMVCQACMRRCSFLWAYAAQLAVTRISAEDDGLLPNATGMGDEDVSKPENGAPQDNGLKEDAPEHGRDSVNEVKAEQKNEPCSSSSSESDLQTVFKKENIKTEPQSSCRLQELQAKQFVKKDAATYWPLNWRSKLCTCQDCMKMYGELDVLFLTDECDTVLAYENKGKNDQATDRRDPLMDTLSSMNRVQQVELICEYNDLKTELKDYLKRFADEGTVVKREDIQQFFEEFQSKKRRRVDGLQYYCS</sequence>
<dbReference type="EC" id="2.3.2.27"/>
<dbReference type="EMBL" id="AK088208">
    <property type="protein sequence ID" value="BAC40212.1"/>
    <property type="molecule type" value="mRNA"/>
</dbReference>
<dbReference type="EMBL" id="BC051678">
    <property type="protein sequence ID" value="AAH51678.1"/>
    <property type="molecule type" value="mRNA"/>
</dbReference>
<dbReference type="CCDS" id="CCDS26124.1"/>
<dbReference type="RefSeq" id="NP_079942.1">
    <property type="nucleotide sequence ID" value="NM_025666.2"/>
</dbReference>
<dbReference type="BioGRID" id="211602">
    <property type="interactions" value="1"/>
</dbReference>
<dbReference type="FunCoup" id="Q8BU04">
    <property type="interactions" value="4392"/>
</dbReference>
<dbReference type="STRING" id="10090.ENSMUSP00000041247"/>
<dbReference type="iPTMnet" id="Q8BU04"/>
<dbReference type="PhosphoSitePlus" id="Q8BU04"/>
<dbReference type="jPOST" id="Q8BU04"/>
<dbReference type="PaxDb" id="10090-ENSMUSP00000041247"/>
<dbReference type="ProteomicsDB" id="298112"/>
<dbReference type="Pumba" id="Q8BU04"/>
<dbReference type="DNASU" id="66622"/>
<dbReference type="Ensembl" id="ENSMUST00000046404.8">
    <property type="protein sequence ID" value="ENSMUSP00000041247.7"/>
    <property type="gene ID" value="ENSMUSG00000041712.8"/>
</dbReference>
<dbReference type="GeneID" id="66622"/>
<dbReference type="KEGG" id="mmu:66622"/>
<dbReference type="UCSC" id="uc007ouo.1">
    <property type="organism name" value="mouse"/>
</dbReference>
<dbReference type="AGR" id="MGI:1913872"/>
<dbReference type="CTD" id="55148"/>
<dbReference type="MGI" id="MGI:1913872">
    <property type="gene designation" value="Ubr7"/>
</dbReference>
<dbReference type="VEuPathDB" id="HostDB:ENSMUSG00000041712"/>
<dbReference type="eggNOG" id="KOG2752">
    <property type="taxonomic scope" value="Eukaryota"/>
</dbReference>
<dbReference type="GeneTree" id="ENSGT00390000017610"/>
<dbReference type="HOGENOM" id="CLU_025221_0_0_1"/>
<dbReference type="InParanoid" id="Q8BU04"/>
<dbReference type="OMA" id="GAMVYNH"/>
<dbReference type="OrthoDB" id="10262564at2759"/>
<dbReference type="PhylomeDB" id="Q8BU04"/>
<dbReference type="TreeFam" id="TF105941"/>
<dbReference type="UniPathway" id="UPA00143"/>
<dbReference type="BioGRID-ORCS" id="66622">
    <property type="hits" value="3 hits in 82 CRISPR screens"/>
</dbReference>
<dbReference type="ChiTaRS" id="Ubr7">
    <property type="organism name" value="mouse"/>
</dbReference>
<dbReference type="PRO" id="PR:Q8BU04"/>
<dbReference type="Proteomes" id="UP000000589">
    <property type="component" value="Chromosome 12"/>
</dbReference>
<dbReference type="RNAct" id="Q8BU04">
    <property type="molecule type" value="protein"/>
</dbReference>
<dbReference type="Bgee" id="ENSMUSG00000041712">
    <property type="expression patterns" value="Expressed in saccule of membranous labyrinth and 265 other cell types or tissues"/>
</dbReference>
<dbReference type="ExpressionAtlas" id="Q8BU04">
    <property type="expression patterns" value="baseline and differential"/>
</dbReference>
<dbReference type="GO" id="GO:0061630">
    <property type="term" value="F:ubiquitin protein ligase activity"/>
    <property type="evidence" value="ECO:0007669"/>
    <property type="project" value="InterPro"/>
</dbReference>
<dbReference type="GO" id="GO:0008270">
    <property type="term" value="F:zinc ion binding"/>
    <property type="evidence" value="ECO:0007669"/>
    <property type="project" value="UniProtKB-KW"/>
</dbReference>
<dbReference type="GO" id="GO:0016567">
    <property type="term" value="P:protein ubiquitination"/>
    <property type="evidence" value="ECO:0007669"/>
    <property type="project" value="UniProtKB-UniPathway"/>
</dbReference>
<dbReference type="CDD" id="cd15542">
    <property type="entry name" value="PHD_UBR7"/>
    <property type="match status" value="1"/>
</dbReference>
<dbReference type="CDD" id="cd19677">
    <property type="entry name" value="UBR-box_UBR7"/>
    <property type="match status" value="1"/>
</dbReference>
<dbReference type="FunFam" id="3.30.40.10:FF:000183">
    <property type="entry name" value="putative E3 ubiquitin-protein ligase UBR7"/>
    <property type="match status" value="1"/>
</dbReference>
<dbReference type="Gene3D" id="3.30.40.10">
    <property type="entry name" value="Zinc/RING finger domain, C3HC4 (zinc finger)"/>
    <property type="match status" value="1"/>
</dbReference>
<dbReference type="InterPro" id="IPR040204">
    <property type="entry name" value="UBR7"/>
</dbReference>
<dbReference type="InterPro" id="IPR047506">
    <property type="entry name" value="UBR7-like_UBR-box"/>
</dbReference>
<dbReference type="InterPro" id="IPR011011">
    <property type="entry name" value="Znf_FYVE_PHD"/>
</dbReference>
<dbReference type="InterPro" id="IPR013083">
    <property type="entry name" value="Znf_RING/FYVE/PHD"/>
</dbReference>
<dbReference type="InterPro" id="IPR003126">
    <property type="entry name" value="Znf_UBR"/>
</dbReference>
<dbReference type="PANTHER" id="PTHR13513">
    <property type="entry name" value="E3 UBIQUITIN-PROTEIN LIGASE UBR7"/>
    <property type="match status" value="1"/>
</dbReference>
<dbReference type="PANTHER" id="PTHR13513:SF9">
    <property type="entry name" value="E3 UBIQUITIN-PROTEIN LIGASE UBR7-RELATED"/>
    <property type="match status" value="1"/>
</dbReference>
<dbReference type="Pfam" id="PF02207">
    <property type="entry name" value="zf-UBR"/>
    <property type="match status" value="1"/>
</dbReference>
<dbReference type="SMART" id="SM00396">
    <property type="entry name" value="ZnF_UBR1"/>
    <property type="match status" value="1"/>
</dbReference>
<dbReference type="SUPFAM" id="SSF57903">
    <property type="entry name" value="FYVE/PHD zinc finger"/>
    <property type="match status" value="1"/>
</dbReference>
<dbReference type="PROSITE" id="PS51157">
    <property type="entry name" value="ZF_UBR"/>
    <property type="match status" value="1"/>
</dbReference>
<evidence type="ECO:0000250" key="1"/>
<evidence type="ECO:0000250" key="2">
    <source>
        <dbReference type="UniProtKB" id="Q8N806"/>
    </source>
</evidence>
<evidence type="ECO:0000255" key="3">
    <source>
        <dbReference type="PROSITE-ProRule" id="PRU00508"/>
    </source>
</evidence>
<evidence type="ECO:0000256" key="4">
    <source>
        <dbReference type="SAM" id="MobiDB-lite"/>
    </source>
</evidence>
<evidence type="ECO:0000269" key="5">
    <source>
    </source>
</evidence>
<proteinExistence type="evidence at protein level"/>
<protein>
    <recommendedName>
        <fullName>Putative E3 ubiquitin-protein ligase UBR7</fullName>
        <ecNumber>2.3.2.27</ecNumber>
    </recommendedName>
    <alternativeName>
        <fullName>N-recognin-7</fullName>
    </alternativeName>
    <alternativeName>
        <fullName>RING-type E3 ubiquitin transferase UBR7</fullName>
    </alternativeName>
</protein>
<name>UBR7_MOUSE</name>